<accession>Q46787</accession>
<accession>Q2M9Y6</accession>
<feature type="chain" id="PRO_0000206490" description="Uncharacterized protein YgeG">
    <location>
        <begin position="1"/>
        <end position="163"/>
    </location>
</feature>
<dbReference type="EMBL" id="U28375">
    <property type="protein sequence ID" value="AAA83033.1"/>
    <property type="molecule type" value="Genomic_DNA"/>
</dbReference>
<dbReference type="EMBL" id="U00096">
    <property type="protein sequence ID" value="AAC75890.1"/>
    <property type="molecule type" value="Genomic_DNA"/>
</dbReference>
<dbReference type="EMBL" id="AP009048">
    <property type="protein sequence ID" value="BAE76920.1"/>
    <property type="molecule type" value="Genomic_DNA"/>
</dbReference>
<dbReference type="PIR" id="D65068">
    <property type="entry name" value="D65068"/>
</dbReference>
<dbReference type="RefSeq" id="NP_417328.1">
    <property type="nucleotide sequence ID" value="NC_000913.3"/>
</dbReference>
<dbReference type="RefSeq" id="WP_000102780.1">
    <property type="nucleotide sequence ID" value="NZ_LN832404.1"/>
</dbReference>
<dbReference type="SMR" id="Q46787"/>
<dbReference type="BioGRID" id="4261611">
    <property type="interactions" value="20"/>
</dbReference>
<dbReference type="DIP" id="DIP-12150N"/>
<dbReference type="FunCoup" id="Q46787">
    <property type="interactions" value="157"/>
</dbReference>
<dbReference type="IntAct" id="Q46787">
    <property type="interactions" value="1"/>
</dbReference>
<dbReference type="STRING" id="511145.b2851"/>
<dbReference type="PaxDb" id="511145-b2851"/>
<dbReference type="EnsemblBacteria" id="AAC75890">
    <property type="protein sequence ID" value="AAC75890"/>
    <property type="gene ID" value="b2851"/>
</dbReference>
<dbReference type="GeneID" id="946986"/>
<dbReference type="KEGG" id="ecj:JW2819"/>
<dbReference type="KEGG" id="eco:b2851"/>
<dbReference type="KEGG" id="ecoc:C3026_15650"/>
<dbReference type="PATRIC" id="fig|1411691.4.peg.3881"/>
<dbReference type="EchoBASE" id="EB2852"/>
<dbReference type="eggNOG" id="COG0457">
    <property type="taxonomic scope" value="Bacteria"/>
</dbReference>
<dbReference type="HOGENOM" id="CLU_093829_1_0_6"/>
<dbReference type="InParanoid" id="Q46787"/>
<dbReference type="OMA" id="HDKGNIT"/>
<dbReference type="OrthoDB" id="8591320at2"/>
<dbReference type="PhylomeDB" id="Q46787"/>
<dbReference type="BioCyc" id="EcoCyc:G7471-MONOMER"/>
<dbReference type="PRO" id="PR:Q46787"/>
<dbReference type="Proteomes" id="UP000000625">
    <property type="component" value="Chromosome"/>
</dbReference>
<dbReference type="Gene3D" id="1.25.40.10">
    <property type="entry name" value="Tetratricopeptide repeat domain"/>
    <property type="match status" value="1"/>
</dbReference>
<dbReference type="InterPro" id="IPR005415">
    <property type="entry name" value="T3SS_Ca_resp_chp_LcrH/SycD"/>
</dbReference>
<dbReference type="InterPro" id="IPR016379">
    <property type="entry name" value="T3SS_Ca_resp_chp_LcrH/SycD_sub"/>
</dbReference>
<dbReference type="InterPro" id="IPR011716">
    <property type="entry name" value="TPR-3"/>
</dbReference>
<dbReference type="InterPro" id="IPR011990">
    <property type="entry name" value="TPR-like_helical_dom_sf"/>
</dbReference>
<dbReference type="Pfam" id="PF07720">
    <property type="entry name" value="TPR_3"/>
    <property type="match status" value="2"/>
</dbReference>
<dbReference type="PIRSF" id="PIRSF003165">
    <property type="entry name" value="Chaperone_SicA"/>
    <property type="match status" value="1"/>
</dbReference>
<dbReference type="PRINTS" id="PR01595">
    <property type="entry name" value="SYCDCHAPRONE"/>
</dbReference>
<dbReference type="SUPFAM" id="SSF48452">
    <property type="entry name" value="TPR-like"/>
    <property type="match status" value="1"/>
</dbReference>
<name>YGEG_ECOLI</name>
<proteinExistence type="inferred from homology"/>
<gene>
    <name type="primary">ygeG</name>
    <name type="ordered locus">b2851</name>
    <name type="ordered locus">JW2819</name>
</gene>
<organism>
    <name type="scientific">Escherichia coli (strain K12)</name>
    <dbReference type="NCBI Taxonomy" id="83333"/>
    <lineage>
        <taxon>Bacteria</taxon>
        <taxon>Pseudomonadati</taxon>
        <taxon>Pseudomonadota</taxon>
        <taxon>Gammaproteobacteria</taxon>
        <taxon>Enterobacterales</taxon>
        <taxon>Enterobacteriaceae</taxon>
        <taxon>Escherichia</taxon>
    </lineage>
</organism>
<reference key="1">
    <citation type="journal article" date="1997" name="Science">
        <title>The complete genome sequence of Escherichia coli K-12.</title>
        <authorList>
            <person name="Blattner F.R."/>
            <person name="Plunkett G. III"/>
            <person name="Bloch C.A."/>
            <person name="Perna N.T."/>
            <person name="Burland V."/>
            <person name="Riley M."/>
            <person name="Collado-Vides J."/>
            <person name="Glasner J.D."/>
            <person name="Rode C.K."/>
            <person name="Mayhew G.F."/>
            <person name="Gregor J."/>
            <person name="Davis N.W."/>
            <person name="Kirkpatrick H.A."/>
            <person name="Goeden M.A."/>
            <person name="Rose D.J."/>
            <person name="Mau B."/>
            <person name="Shao Y."/>
        </authorList>
    </citation>
    <scope>NUCLEOTIDE SEQUENCE [LARGE SCALE GENOMIC DNA]</scope>
    <source>
        <strain>K12 / MG1655 / ATCC 47076</strain>
    </source>
</reference>
<reference key="2">
    <citation type="journal article" date="2006" name="Mol. Syst. Biol.">
        <title>Highly accurate genome sequences of Escherichia coli K-12 strains MG1655 and W3110.</title>
        <authorList>
            <person name="Hayashi K."/>
            <person name="Morooka N."/>
            <person name="Yamamoto Y."/>
            <person name="Fujita K."/>
            <person name="Isono K."/>
            <person name="Choi S."/>
            <person name="Ohtsubo E."/>
            <person name="Baba T."/>
            <person name="Wanner B.L."/>
            <person name="Mori H."/>
            <person name="Horiuchi T."/>
        </authorList>
    </citation>
    <scope>NUCLEOTIDE SEQUENCE [LARGE SCALE GENOMIC DNA]</scope>
    <source>
        <strain>K12 / W3110 / ATCC 27325 / DSM 5911</strain>
    </source>
</reference>
<sequence length="163" mass="19093">MSTETIEIFNNSDEWANQLKHALSKGENLALLHGLTPDILDRIYAYAFDYHEKGNITDAEIYYKFLCIYAFENHEYLKDFASVCQPKKKYQQAYDLYKLSYNYFPYDDYSVIYRMGQCQIGAKNIDNAMQCFYHIINNCEDDSVKSKAQAYIELLNDNSEDNG</sequence>
<comment type="similarity">
    <text evidence="1">Belongs to the LcrH/SycD chaperone family.</text>
</comment>
<protein>
    <recommendedName>
        <fullName>Uncharacterized protein YgeG</fullName>
    </recommendedName>
</protein>
<keyword id="KW-0143">Chaperone</keyword>
<keyword id="KW-1185">Reference proteome</keyword>
<evidence type="ECO:0000305" key="1"/>